<reference key="1">
    <citation type="journal article" date="2006" name="J. Bacteriol.">
        <title>Chromosome rearrangement and diversification of Francisella tularensis revealed by the type B (OSU18) genome sequence.</title>
        <authorList>
            <person name="Petrosino J.F."/>
            <person name="Xiang Q."/>
            <person name="Karpathy S.E."/>
            <person name="Jiang H."/>
            <person name="Yerrapragada S."/>
            <person name="Liu Y."/>
            <person name="Gioia J."/>
            <person name="Hemphill L."/>
            <person name="Gonzalez A."/>
            <person name="Raghavan T.M."/>
            <person name="Uzman A."/>
            <person name="Fox G.E."/>
            <person name="Highlander S."/>
            <person name="Reichard M."/>
            <person name="Morton R.J."/>
            <person name="Clinkenbeard K.D."/>
            <person name="Weinstock G.M."/>
        </authorList>
    </citation>
    <scope>NUCLEOTIDE SEQUENCE [LARGE SCALE GENOMIC DNA]</scope>
    <source>
        <strain>OSU18</strain>
    </source>
</reference>
<comment type="function">
    <text evidence="1">One of the primary rRNA binding proteins, it binds directly to 16S rRNA where it nucleates assembly of the body of the 30S subunit.</text>
</comment>
<comment type="function">
    <text evidence="1">With S5 and S12 plays an important role in translational accuracy.</text>
</comment>
<comment type="subunit">
    <text evidence="1">Part of the 30S ribosomal subunit. Contacts protein S5. The interaction surface between S4 and S5 is involved in control of translational fidelity.</text>
</comment>
<comment type="similarity">
    <text evidence="1">Belongs to the universal ribosomal protein uS4 family.</text>
</comment>
<organism>
    <name type="scientific">Francisella tularensis subsp. holarctica (strain OSU18)</name>
    <dbReference type="NCBI Taxonomy" id="393011"/>
    <lineage>
        <taxon>Bacteria</taxon>
        <taxon>Pseudomonadati</taxon>
        <taxon>Pseudomonadota</taxon>
        <taxon>Gammaproteobacteria</taxon>
        <taxon>Thiotrichales</taxon>
        <taxon>Francisellaceae</taxon>
        <taxon>Francisella</taxon>
    </lineage>
</organism>
<proteinExistence type="inferred from homology"/>
<gene>
    <name evidence="1" type="primary">rpsD</name>
    <name type="ordered locus">FTH_0255</name>
</gene>
<dbReference type="EMBL" id="CP000437">
    <property type="protein sequence ID" value="ABI82280.1"/>
    <property type="molecule type" value="Genomic_DNA"/>
</dbReference>
<dbReference type="RefSeq" id="WP_011648567.1">
    <property type="nucleotide sequence ID" value="NC_008369.1"/>
</dbReference>
<dbReference type="SMR" id="Q0BNQ4"/>
<dbReference type="KEGG" id="fth:FTH_0255"/>
<dbReference type="GO" id="GO:0015935">
    <property type="term" value="C:small ribosomal subunit"/>
    <property type="evidence" value="ECO:0007669"/>
    <property type="project" value="InterPro"/>
</dbReference>
<dbReference type="GO" id="GO:0019843">
    <property type="term" value="F:rRNA binding"/>
    <property type="evidence" value="ECO:0007669"/>
    <property type="project" value="UniProtKB-UniRule"/>
</dbReference>
<dbReference type="GO" id="GO:0003735">
    <property type="term" value="F:structural constituent of ribosome"/>
    <property type="evidence" value="ECO:0007669"/>
    <property type="project" value="InterPro"/>
</dbReference>
<dbReference type="GO" id="GO:0042274">
    <property type="term" value="P:ribosomal small subunit biogenesis"/>
    <property type="evidence" value="ECO:0007669"/>
    <property type="project" value="TreeGrafter"/>
</dbReference>
<dbReference type="GO" id="GO:0006412">
    <property type="term" value="P:translation"/>
    <property type="evidence" value="ECO:0007669"/>
    <property type="project" value="UniProtKB-UniRule"/>
</dbReference>
<dbReference type="CDD" id="cd00165">
    <property type="entry name" value="S4"/>
    <property type="match status" value="1"/>
</dbReference>
<dbReference type="FunFam" id="1.10.1050.10:FF:000001">
    <property type="entry name" value="30S ribosomal protein S4"/>
    <property type="match status" value="1"/>
</dbReference>
<dbReference type="FunFam" id="3.10.290.10:FF:000001">
    <property type="entry name" value="30S ribosomal protein S4"/>
    <property type="match status" value="1"/>
</dbReference>
<dbReference type="Gene3D" id="1.10.1050.10">
    <property type="entry name" value="Ribosomal Protein S4 Delta 41, Chain A, domain 1"/>
    <property type="match status" value="1"/>
</dbReference>
<dbReference type="Gene3D" id="3.10.290.10">
    <property type="entry name" value="RNA-binding S4 domain"/>
    <property type="match status" value="1"/>
</dbReference>
<dbReference type="HAMAP" id="MF_01306_B">
    <property type="entry name" value="Ribosomal_uS4_B"/>
    <property type="match status" value="1"/>
</dbReference>
<dbReference type="InterPro" id="IPR022801">
    <property type="entry name" value="Ribosomal_uS4"/>
</dbReference>
<dbReference type="InterPro" id="IPR005709">
    <property type="entry name" value="Ribosomal_uS4_bac-type"/>
</dbReference>
<dbReference type="InterPro" id="IPR018079">
    <property type="entry name" value="Ribosomal_uS4_CS"/>
</dbReference>
<dbReference type="InterPro" id="IPR001912">
    <property type="entry name" value="Ribosomal_uS4_N"/>
</dbReference>
<dbReference type="InterPro" id="IPR002942">
    <property type="entry name" value="S4_RNA-bd"/>
</dbReference>
<dbReference type="InterPro" id="IPR036986">
    <property type="entry name" value="S4_RNA-bd_sf"/>
</dbReference>
<dbReference type="NCBIfam" id="NF003717">
    <property type="entry name" value="PRK05327.1"/>
    <property type="match status" value="1"/>
</dbReference>
<dbReference type="NCBIfam" id="TIGR01017">
    <property type="entry name" value="rpsD_bact"/>
    <property type="match status" value="1"/>
</dbReference>
<dbReference type="PANTHER" id="PTHR11831">
    <property type="entry name" value="30S 40S RIBOSOMAL PROTEIN"/>
    <property type="match status" value="1"/>
</dbReference>
<dbReference type="PANTHER" id="PTHR11831:SF4">
    <property type="entry name" value="SMALL RIBOSOMAL SUBUNIT PROTEIN US4M"/>
    <property type="match status" value="1"/>
</dbReference>
<dbReference type="Pfam" id="PF00163">
    <property type="entry name" value="Ribosomal_S4"/>
    <property type="match status" value="1"/>
</dbReference>
<dbReference type="Pfam" id="PF01479">
    <property type="entry name" value="S4"/>
    <property type="match status" value="1"/>
</dbReference>
<dbReference type="SMART" id="SM01390">
    <property type="entry name" value="Ribosomal_S4"/>
    <property type="match status" value="1"/>
</dbReference>
<dbReference type="SMART" id="SM00363">
    <property type="entry name" value="S4"/>
    <property type="match status" value="1"/>
</dbReference>
<dbReference type="SUPFAM" id="SSF55174">
    <property type="entry name" value="Alpha-L RNA-binding motif"/>
    <property type="match status" value="1"/>
</dbReference>
<dbReference type="PROSITE" id="PS00632">
    <property type="entry name" value="RIBOSOMAL_S4"/>
    <property type="match status" value="1"/>
</dbReference>
<dbReference type="PROSITE" id="PS50889">
    <property type="entry name" value="S4"/>
    <property type="match status" value="1"/>
</dbReference>
<accession>Q0BNQ4</accession>
<keyword id="KW-0687">Ribonucleoprotein</keyword>
<keyword id="KW-0689">Ribosomal protein</keyword>
<keyword id="KW-0694">RNA-binding</keyword>
<keyword id="KW-0699">rRNA-binding</keyword>
<name>RS4_FRATO</name>
<protein>
    <recommendedName>
        <fullName evidence="1">Small ribosomal subunit protein uS4</fullName>
    </recommendedName>
    <alternativeName>
        <fullName evidence="2">30S ribosomal protein S4</fullName>
    </alternativeName>
</protein>
<evidence type="ECO:0000255" key="1">
    <source>
        <dbReference type="HAMAP-Rule" id="MF_01306"/>
    </source>
</evidence>
<evidence type="ECO:0000305" key="2"/>
<feature type="chain" id="PRO_0000293281" description="Small ribosomal subunit protein uS4">
    <location>
        <begin position="1"/>
        <end position="206"/>
    </location>
</feature>
<feature type="domain" description="S4 RNA-binding" evidence="1">
    <location>
        <begin position="96"/>
        <end position="158"/>
    </location>
</feature>
<sequence>MARYLGPKCKLSRREGTDLFLKSGVKANDEKCKMNTAPGQHGARRARLSDYGLQLREKQKVRRMYGILEGQFKKYYVEASRRKGNTGATLLELLESRLDNVVYRMGFAATRAEARQLVVHKGIMVNGHTCNVPSAQVKVGDVVAVREKAKKQLRIQNAVELAKHRKELSWIDVNTDSLEGTMKSSPDRSELSADINEQLIIELYSK</sequence>